<dbReference type="EMBL" id="CP000003">
    <property type="protein sequence ID" value="AAT86374.1"/>
    <property type="molecule type" value="Genomic_DNA"/>
</dbReference>
<dbReference type="SMR" id="Q5XDY9"/>
<dbReference type="KEGG" id="spa:M6_Spy0239"/>
<dbReference type="HOGENOM" id="CLU_036138_5_0_9"/>
<dbReference type="Proteomes" id="UP000001167">
    <property type="component" value="Chromosome"/>
</dbReference>
<dbReference type="GO" id="GO:0005886">
    <property type="term" value="C:plasma membrane"/>
    <property type="evidence" value="ECO:0007669"/>
    <property type="project" value="UniProtKB-SubCell"/>
</dbReference>
<dbReference type="GO" id="GO:0032977">
    <property type="term" value="F:membrane insertase activity"/>
    <property type="evidence" value="ECO:0007669"/>
    <property type="project" value="InterPro"/>
</dbReference>
<dbReference type="GO" id="GO:0051205">
    <property type="term" value="P:protein insertion into membrane"/>
    <property type="evidence" value="ECO:0007669"/>
    <property type="project" value="TreeGrafter"/>
</dbReference>
<dbReference type="GO" id="GO:0015031">
    <property type="term" value="P:protein transport"/>
    <property type="evidence" value="ECO:0007669"/>
    <property type="project" value="UniProtKB-KW"/>
</dbReference>
<dbReference type="CDD" id="cd20070">
    <property type="entry name" value="5TM_YidC_Alb3"/>
    <property type="match status" value="1"/>
</dbReference>
<dbReference type="HAMAP" id="MF_01811">
    <property type="entry name" value="YidC_type2"/>
    <property type="match status" value="1"/>
</dbReference>
<dbReference type="InterPro" id="IPR001708">
    <property type="entry name" value="YidC/ALB3/OXA1/COX18"/>
</dbReference>
<dbReference type="InterPro" id="IPR028055">
    <property type="entry name" value="YidC/Oxa/ALB_C"/>
</dbReference>
<dbReference type="InterPro" id="IPR023060">
    <property type="entry name" value="YidC/YidC1/YidC2_Firmicutes"/>
</dbReference>
<dbReference type="InterPro" id="IPR047196">
    <property type="entry name" value="YidC_ALB_C"/>
</dbReference>
<dbReference type="NCBIfam" id="TIGR03592">
    <property type="entry name" value="yidC_oxa1_cterm"/>
    <property type="match status" value="1"/>
</dbReference>
<dbReference type="PANTHER" id="PTHR12428:SF65">
    <property type="entry name" value="CYTOCHROME C OXIDASE ASSEMBLY PROTEIN COX18, MITOCHONDRIAL"/>
    <property type="match status" value="1"/>
</dbReference>
<dbReference type="PANTHER" id="PTHR12428">
    <property type="entry name" value="OXA1"/>
    <property type="match status" value="1"/>
</dbReference>
<dbReference type="Pfam" id="PF02096">
    <property type="entry name" value="60KD_IMP"/>
    <property type="match status" value="1"/>
</dbReference>
<dbReference type="PRINTS" id="PR00701">
    <property type="entry name" value="60KDINNERMP"/>
</dbReference>
<dbReference type="PROSITE" id="PS51257">
    <property type="entry name" value="PROKAR_LIPOPROTEIN"/>
    <property type="match status" value="1"/>
</dbReference>
<organism>
    <name type="scientific">Streptococcus pyogenes serotype M6 (strain ATCC BAA-946 / MGAS10394)</name>
    <dbReference type="NCBI Taxonomy" id="286636"/>
    <lineage>
        <taxon>Bacteria</taxon>
        <taxon>Bacillati</taxon>
        <taxon>Bacillota</taxon>
        <taxon>Bacilli</taxon>
        <taxon>Lactobacillales</taxon>
        <taxon>Streptococcaceae</taxon>
        <taxon>Streptococcus</taxon>
    </lineage>
</organism>
<name>YIDC1_STRP6</name>
<gene>
    <name evidence="1" type="primary">yidC1</name>
    <name type="ordered locus">M6_Spy0239</name>
</gene>
<proteinExistence type="inferred from homology"/>
<accession>Q5XDY9</accession>
<keyword id="KW-1003">Cell membrane</keyword>
<keyword id="KW-0143">Chaperone</keyword>
<keyword id="KW-0449">Lipoprotein</keyword>
<keyword id="KW-0472">Membrane</keyword>
<keyword id="KW-0564">Palmitate</keyword>
<keyword id="KW-0653">Protein transport</keyword>
<keyword id="KW-0732">Signal</keyword>
<keyword id="KW-0812">Transmembrane</keyword>
<keyword id="KW-1133">Transmembrane helix</keyword>
<keyword id="KW-0813">Transport</keyword>
<feature type="signal peptide" evidence="1">
    <location>
        <begin position="1"/>
        <end position="25"/>
    </location>
</feature>
<feature type="chain" id="PRO_0000020414" description="Membrane protein insertase YidC 1">
    <location>
        <begin position="26"/>
        <end position="275"/>
    </location>
</feature>
<feature type="transmembrane region" description="Helical" evidence="1">
    <location>
        <begin position="58"/>
        <end position="78"/>
    </location>
</feature>
<feature type="transmembrane region" description="Helical" evidence="1">
    <location>
        <begin position="129"/>
        <end position="149"/>
    </location>
</feature>
<feature type="transmembrane region" description="Helical" evidence="1">
    <location>
        <begin position="171"/>
        <end position="191"/>
    </location>
</feature>
<feature type="transmembrane region" description="Helical" evidence="1">
    <location>
        <begin position="198"/>
        <end position="216"/>
    </location>
</feature>
<feature type="transmembrane region" description="Helical" evidence="1">
    <location>
        <begin position="222"/>
        <end position="240"/>
    </location>
</feature>
<feature type="lipid moiety-binding region" description="N-palmitoyl cysteine" evidence="1">
    <location>
        <position position="26"/>
    </location>
</feature>
<feature type="lipid moiety-binding region" description="S-diacylglycerol cysteine" evidence="1">
    <location>
        <position position="26"/>
    </location>
</feature>
<evidence type="ECO:0000255" key="1">
    <source>
        <dbReference type="HAMAP-Rule" id="MF_01811"/>
    </source>
</evidence>
<reference key="1">
    <citation type="journal article" date="2004" name="J. Infect. Dis.">
        <title>Progress toward characterization of the group A Streptococcus metagenome: complete genome sequence of a macrolide-resistant serotype M6 strain.</title>
        <authorList>
            <person name="Banks D.J."/>
            <person name="Porcella S.F."/>
            <person name="Barbian K.D."/>
            <person name="Beres S.B."/>
            <person name="Philips L.E."/>
            <person name="Voyich J.M."/>
            <person name="DeLeo F.R."/>
            <person name="Martin J.M."/>
            <person name="Somerville G.A."/>
            <person name="Musser J.M."/>
        </authorList>
    </citation>
    <scope>NUCLEOTIDE SEQUENCE [LARGE SCALE GENOMIC DNA]</scope>
    <source>
        <strain>ATCC BAA-946 / MGAS10394</strain>
    </source>
</reference>
<sequence length="275" mass="31765">MRKVLRVKKNIKIARIVPLVLLLVACGRGEVTAQSSSGWDQLVYLFARAIQWLSFDGSIGVGIILFTLTIRLMLMPLFNMQIKSSQKMQDIQPELRELQKKYAGKDTQTRMKLAEESQALYKKYGVNPYASLLPLLIQMPVMIALFQALTRVSFLKTGTFLWVELAQHDHLYLLPVLAAVFTFLSTWLTNLATKEKNVMMTVMIYVMPLMIFFMGFNLASGVVLYWTVSNAFQVVQLLLLNNPFKIIAERQRLANEEKERRLRERRARKKAMKRK</sequence>
<protein>
    <recommendedName>
        <fullName evidence="1">Membrane protein insertase YidC 1</fullName>
    </recommendedName>
    <alternativeName>
        <fullName evidence="1">Foldase YidC 1</fullName>
    </alternativeName>
    <alternativeName>
        <fullName evidence="1">Membrane integrase YidC 1</fullName>
    </alternativeName>
    <alternativeName>
        <fullName evidence="1">Membrane protein YidC 1</fullName>
    </alternativeName>
</protein>
<comment type="function">
    <text evidence="1">Required for the insertion and/or proper folding and/or complex formation of integral membrane proteins into the membrane. Involved in integration of membrane proteins that insert both dependently and independently of the Sec translocase complex, as well as at least some lipoproteins.</text>
</comment>
<comment type="subcellular location">
    <subcellularLocation>
        <location evidence="1">Cell membrane</location>
        <topology evidence="1">Multi-pass membrane protein</topology>
    </subcellularLocation>
</comment>
<comment type="similarity">
    <text evidence="1">Belongs to the OXA1/ALB3/YidC family. Type 2 subfamily.</text>
</comment>